<comment type="function">
    <text evidence="1">Essential component of the TIM22 complex, a complex that mediates the import and insertion of multi-pass transmembrane proteins into the mitochondrial inner membrane. The TIM22 complex forms a twin-pore translocase that uses the membrane potential as external driving force (By similarity).</text>
</comment>
<comment type="subunit">
    <text evidence="1">Component of the TIM22 complex, whose core is composed of tim22 and tim54, associated with the 70 kDa heterohexamer composed of tim9 and tim10 (or tim8 and tim13).</text>
</comment>
<comment type="subcellular location">
    <subcellularLocation>
        <location evidence="1">Mitochondrion inner membrane</location>
        <topology evidence="1">Single-pass membrane protein</topology>
    </subcellularLocation>
</comment>
<comment type="similarity">
    <text evidence="4">Belongs to the TIM54 family.</text>
</comment>
<comment type="sequence caution" evidence="4">
    <conflict type="erroneous initiation">
        <sequence resource="EMBL-CDS" id="AAK26641"/>
    </conflict>
</comment>
<comment type="sequence caution" evidence="4">
    <conflict type="erroneous initiation">
        <sequence resource="EMBL-CDS" id="AAK26642"/>
    </conflict>
</comment>
<gene>
    <name type="primary">tim54</name>
    <name type="ORF">NCU07295</name>
</gene>
<keyword id="KW-0472">Membrane</keyword>
<keyword id="KW-0496">Mitochondrion</keyword>
<keyword id="KW-0999">Mitochondrion inner membrane</keyword>
<keyword id="KW-0653">Protein transport</keyword>
<keyword id="KW-1185">Reference proteome</keyword>
<keyword id="KW-0809">Transit peptide</keyword>
<keyword id="KW-0811">Translocation</keyword>
<keyword id="KW-0812">Transmembrane</keyword>
<keyword id="KW-1133">Transmembrane helix</keyword>
<keyword id="KW-0813">Transport</keyword>
<dbReference type="EMBL" id="AF343072">
    <property type="protein sequence ID" value="AAK26641.1"/>
    <property type="status" value="ALT_INIT"/>
    <property type="molecule type" value="Genomic_DNA"/>
</dbReference>
<dbReference type="EMBL" id="AF343073">
    <property type="protein sequence ID" value="AAK26642.1"/>
    <property type="status" value="ALT_INIT"/>
    <property type="molecule type" value="mRNA"/>
</dbReference>
<dbReference type="EMBL" id="CM002239">
    <property type="protein sequence ID" value="EAA32913.2"/>
    <property type="molecule type" value="Genomic_DNA"/>
</dbReference>
<dbReference type="RefSeq" id="XP_962149.2">
    <property type="nucleotide sequence ID" value="XM_957056.3"/>
</dbReference>
<dbReference type="SMR" id="Q9C0Q7"/>
<dbReference type="FunCoup" id="Q9C0Q7">
    <property type="interactions" value="19"/>
</dbReference>
<dbReference type="STRING" id="367110.Q9C0Q7"/>
<dbReference type="PaxDb" id="5141-EFNCRP00000007146"/>
<dbReference type="EnsemblFungi" id="EAA32913">
    <property type="protein sequence ID" value="EAA32913"/>
    <property type="gene ID" value="NCU07295"/>
</dbReference>
<dbReference type="GeneID" id="3878298"/>
<dbReference type="KEGG" id="ncr:NCU07295"/>
<dbReference type="VEuPathDB" id="FungiDB:NCU07295"/>
<dbReference type="HOGENOM" id="CLU_039097_1_0_1"/>
<dbReference type="InParanoid" id="Q9C0Q7"/>
<dbReference type="OMA" id="RNWMIFF"/>
<dbReference type="OrthoDB" id="5598305at2759"/>
<dbReference type="Proteomes" id="UP000001805">
    <property type="component" value="Chromosome 4, Linkage Group IV"/>
</dbReference>
<dbReference type="GO" id="GO:0005737">
    <property type="term" value="C:cytoplasm"/>
    <property type="evidence" value="ECO:0000318"/>
    <property type="project" value="GO_Central"/>
</dbReference>
<dbReference type="GO" id="GO:0043231">
    <property type="term" value="C:intracellular membrane-bounded organelle"/>
    <property type="evidence" value="ECO:0000318"/>
    <property type="project" value="GO_Central"/>
</dbReference>
<dbReference type="GO" id="GO:0016020">
    <property type="term" value="C:membrane"/>
    <property type="evidence" value="ECO:0000318"/>
    <property type="project" value="GO_Central"/>
</dbReference>
<dbReference type="GO" id="GO:0005743">
    <property type="term" value="C:mitochondrial inner membrane"/>
    <property type="evidence" value="ECO:0007669"/>
    <property type="project" value="UniProtKB-SubCell"/>
</dbReference>
<dbReference type="GO" id="GO:0015031">
    <property type="term" value="P:protein transport"/>
    <property type="evidence" value="ECO:0007669"/>
    <property type="project" value="UniProtKB-KW"/>
</dbReference>
<dbReference type="InterPro" id="IPR050187">
    <property type="entry name" value="Lipid_Phosphate_FormReg"/>
</dbReference>
<dbReference type="InterPro" id="IPR021056">
    <property type="entry name" value="Mt_import_IM_translocase_Tim54"/>
</dbReference>
<dbReference type="PANTHER" id="PTHR12358:SF101">
    <property type="entry name" value="MITOCHONDRIAL IMPORT INNER MEMBRANE TRANSLOCASE SUBUNIT TIM54"/>
    <property type="match status" value="1"/>
</dbReference>
<dbReference type="PANTHER" id="PTHR12358">
    <property type="entry name" value="SPHINGOSINE KINASE"/>
    <property type="match status" value="1"/>
</dbReference>
<dbReference type="Pfam" id="PF11711">
    <property type="entry name" value="Tim54"/>
    <property type="match status" value="1"/>
</dbReference>
<dbReference type="SUPFAM" id="SSF101447">
    <property type="entry name" value="Formin homology 2 domain (FH2 domain)"/>
    <property type="match status" value="1"/>
</dbReference>
<protein>
    <recommendedName>
        <fullName>Mitochondrial import inner membrane translocase subunit tim54</fullName>
    </recommendedName>
</protein>
<proteinExistence type="evidence at transcript level"/>
<feature type="transit peptide" description="Mitochondrion">
    <location>
        <begin position="1"/>
        <end position="52"/>
    </location>
</feature>
<feature type="chain" id="PRO_0000228017" description="Mitochondrial import inner membrane translocase subunit tim54">
    <location>
        <begin position="53"/>
        <end position="468"/>
    </location>
</feature>
<feature type="topological domain" description="Mitochondrial matrix" evidence="2">
    <location>
        <begin position="53"/>
        <end position="58"/>
    </location>
</feature>
<feature type="transmembrane region" description="Helical" evidence="2">
    <location>
        <begin position="59"/>
        <end position="75"/>
    </location>
</feature>
<feature type="topological domain" description="Mitochondrial intermembrane" evidence="2">
    <location>
        <begin position="76"/>
        <end position="468"/>
    </location>
</feature>
<feature type="region of interest" description="Disordered" evidence="3">
    <location>
        <begin position="1"/>
        <end position="34"/>
    </location>
</feature>
<feature type="region of interest" description="Disordered" evidence="3">
    <location>
        <begin position="233"/>
        <end position="291"/>
    </location>
</feature>
<feature type="compositionally biased region" description="Pro residues" evidence="3">
    <location>
        <begin position="1"/>
        <end position="15"/>
    </location>
</feature>
<feature type="compositionally biased region" description="Pro residues" evidence="3">
    <location>
        <begin position="22"/>
        <end position="34"/>
    </location>
</feature>
<feature type="compositionally biased region" description="Pro residues" evidence="3">
    <location>
        <begin position="235"/>
        <end position="244"/>
    </location>
</feature>
<feature type="compositionally biased region" description="Basic and acidic residues" evidence="3">
    <location>
        <begin position="254"/>
        <end position="269"/>
    </location>
</feature>
<feature type="compositionally biased region" description="Polar residues" evidence="3">
    <location>
        <begin position="279"/>
        <end position="289"/>
    </location>
</feature>
<sequence length="468" mass="53075">MADPVPPASTAPPAAPAATTATPPPPPPPPPPKALRPQNQALRMLGLPNLPNKLPSRNWMIFWTVSASITAAIIYDRREKRRNIAKWRHAVEHLAAEPITDKLGLEQPRKLTIYLSAPPGDGLRVAQDHYTEYVKPVLAASGLDWEFVQGRREGDVRAVVAERLRKVRRGWENKEEQDPNREPTKDELIEIYRQQRGIKDYEGVRGDVVIGRHTWKEYLRGLHEGWLGPLVAPAEPAPLPPTPAPAAAEGSTSTEDKPAEEKKEEEAPKPKRPPQPKPYNTTSDYSSETLHPLTPQELTPAVPIREPHILGFLNTPTRMVRFFNRRSLADDIGREVAAVCLATHREFQQQTNPDAPSTDSVQYEQAKELEWEEQDWPKKVWKEDEADADKEVTEKIHIKPVVMDPRLAHRMRRFALTPEDEDRVSKIKVPEEEVEGWIKGSLRKACHWGYDKAFNKKKLVPLEDKDVE</sequence>
<name>TIM54_NEUCR</name>
<accession>Q9C0Q7</accession>
<evidence type="ECO:0000250" key="1"/>
<evidence type="ECO:0000255" key="2"/>
<evidence type="ECO:0000256" key="3">
    <source>
        <dbReference type="SAM" id="MobiDB-lite"/>
    </source>
</evidence>
<evidence type="ECO:0000305" key="4"/>
<reference key="1">
    <citation type="journal article" date="2004" name="Mol. Biol. Cell">
        <title>Reconstituted TOM core complex and Tim9/Tim10 complex of mitochondria are sufficient for translocation of the ADP/ATP carrier across membranes.</title>
        <authorList>
            <person name="Vasiljev A."/>
            <person name="Ahting U."/>
            <person name="Nargang F.E."/>
            <person name="Go N.E."/>
            <person name="Habib S.J."/>
            <person name="Kozany C."/>
            <person name="Panneels V."/>
            <person name="Sinning I."/>
            <person name="Prokisch H."/>
            <person name="Neupert W."/>
            <person name="Nussberger S."/>
            <person name="Rapaport D."/>
        </authorList>
    </citation>
    <scope>NUCLEOTIDE SEQUENCE [GENOMIC DNA / MRNA]</scope>
</reference>
<reference key="2">
    <citation type="journal article" date="2003" name="Nature">
        <title>The genome sequence of the filamentous fungus Neurospora crassa.</title>
        <authorList>
            <person name="Galagan J.E."/>
            <person name="Calvo S.E."/>
            <person name="Borkovich K.A."/>
            <person name="Selker E.U."/>
            <person name="Read N.D."/>
            <person name="Jaffe D.B."/>
            <person name="FitzHugh W."/>
            <person name="Ma L.-J."/>
            <person name="Smirnov S."/>
            <person name="Purcell S."/>
            <person name="Rehman B."/>
            <person name="Elkins T."/>
            <person name="Engels R."/>
            <person name="Wang S."/>
            <person name="Nielsen C.B."/>
            <person name="Butler J."/>
            <person name="Endrizzi M."/>
            <person name="Qui D."/>
            <person name="Ianakiev P."/>
            <person name="Bell-Pedersen D."/>
            <person name="Nelson M.A."/>
            <person name="Werner-Washburne M."/>
            <person name="Selitrennikoff C.P."/>
            <person name="Kinsey J.A."/>
            <person name="Braun E.L."/>
            <person name="Zelter A."/>
            <person name="Schulte U."/>
            <person name="Kothe G.O."/>
            <person name="Jedd G."/>
            <person name="Mewes H.-W."/>
            <person name="Staben C."/>
            <person name="Marcotte E."/>
            <person name="Greenberg D."/>
            <person name="Roy A."/>
            <person name="Foley K."/>
            <person name="Naylor J."/>
            <person name="Stange-Thomann N."/>
            <person name="Barrett R."/>
            <person name="Gnerre S."/>
            <person name="Kamal M."/>
            <person name="Kamvysselis M."/>
            <person name="Mauceli E.W."/>
            <person name="Bielke C."/>
            <person name="Rudd S."/>
            <person name="Frishman D."/>
            <person name="Krystofova S."/>
            <person name="Rasmussen C."/>
            <person name="Metzenberg R.L."/>
            <person name="Perkins D.D."/>
            <person name="Kroken S."/>
            <person name="Cogoni C."/>
            <person name="Macino G."/>
            <person name="Catcheside D.E.A."/>
            <person name="Li W."/>
            <person name="Pratt R.J."/>
            <person name="Osmani S.A."/>
            <person name="DeSouza C.P.C."/>
            <person name="Glass N.L."/>
            <person name="Orbach M.J."/>
            <person name="Berglund J.A."/>
            <person name="Voelker R."/>
            <person name="Yarden O."/>
            <person name="Plamann M."/>
            <person name="Seiler S."/>
            <person name="Dunlap J.C."/>
            <person name="Radford A."/>
            <person name="Aramayo R."/>
            <person name="Natvig D.O."/>
            <person name="Alex L.A."/>
            <person name="Mannhaupt G."/>
            <person name="Ebbole D.J."/>
            <person name="Freitag M."/>
            <person name="Paulsen I."/>
            <person name="Sachs M.S."/>
            <person name="Lander E.S."/>
            <person name="Nusbaum C."/>
            <person name="Birren B.W."/>
        </authorList>
    </citation>
    <scope>NUCLEOTIDE SEQUENCE [LARGE SCALE GENOMIC DNA]</scope>
    <source>
        <strain>ATCC 24698 / 74-OR23-1A / CBS 708.71 / DSM 1257 / FGSC 987</strain>
    </source>
</reference>
<organism>
    <name type="scientific">Neurospora crassa (strain ATCC 24698 / 74-OR23-1A / CBS 708.71 / DSM 1257 / FGSC 987)</name>
    <dbReference type="NCBI Taxonomy" id="367110"/>
    <lineage>
        <taxon>Eukaryota</taxon>
        <taxon>Fungi</taxon>
        <taxon>Dikarya</taxon>
        <taxon>Ascomycota</taxon>
        <taxon>Pezizomycotina</taxon>
        <taxon>Sordariomycetes</taxon>
        <taxon>Sordariomycetidae</taxon>
        <taxon>Sordariales</taxon>
        <taxon>Sordariaceae</taxon>
        <taxon>Neurospora</taxon>
    </lineage>
</organism>